<reference key="1">
    <citation type="journal article" date="2001" name="Genes Genet. Syst.">
        <title>Molecular evolutionary analysis of a histone gene repeating unit from Drosophila simulans.</title>
        <authorList>
            <person name="Tsunemoto K."/>
            <person name="Matsuo Y."/>
        </authorList>
    </citation>
    <scope>NUCLEOTIDE SEQUENCE [GENOMIC DNA] (HIS2B)</scope>
</reference>
<reference key="2">
    <citation type="journal article" date="2007" name="Nature">
        <title>Evolution of genes and genomes on the Drosophila phylogeny.</title>
        <authorList>
            <consortium name="Drosophila 12 genomes consortium"/>
        </authorList>
    </citation>
    <scope>NUCLEOTIDE SEQUENCE [LARGE SCALE GENOMIC DNA] (GG10953; GG11014; GG11016; GG11018; GG11020; GG11022; GG12581; GG12583; GG12585; GG12957; GG13028; GG13030; GG13032; GG13035; GG13036; GG13057; GG13061; GG16373; GG18684; GG19831; GG19845; GG19848; GG21488; GG21492 AND GG21494)</scope>
    <source>
        <strain>Tucson 14021-0224.01</strain>
    </source>
</reference>
<evidence type="ECO:0000250" key="1"/>
<evidence type="ECO:0000250" key="2">
    <source>
        <dbReference type="UniProtKB" id="P02283"/>
    </source>
</evidence>
<evidence type="ECO:0000256" key="3">
    <source>
        <dbReference type="SAM" id="MobiDB-lite"/>
    </source>
</evidence>
<evidence type="ECO:0000305" key="4"/>
<organism>
    <name type="scientific">Drosophila erecta</name>
    <name type="common">Fruit fly</name>
    <dbReference type="NCBI Taxonomy" id="7220"/>
    <lineage>
        <taxon>Eukaryota</taxon>
        <taxon>Metazoa</taxon>
        <taxon>Ecdysozoa</taxon>
        <taxon>Arthropoda</taxon>
        <taxon>Hexapoda</taxon>
        <taxon>Insecta</taxon>
        <taxon>Pterygota</taxon>
        <taxon>Neoptera</taxon>
        <taxon>Endopterygota</taxon>
        <taxon>Diptera</taxon>
        <taxon>Brachycera</taxon>
        <taxon>Muscomorpha</taxon>
        <taxon>Ephydroidea</taxon>
        <taxon>Drosophilidae</taxon>
        <taxon>Drosophila</taxon>
        <taxon>Sophophora</taxon>
    </lineage>
</organism>
<name>H2B_DROER</name>
<keyword id="KW-0158">Chromosome</keyword>
<keyword id="KW-0238">DNA-binding</keyword>
<keyword id="KW-0325">Glycoprotein</keyword>
<keyword id="KW-1017">Isopeptide bond</keyword>
<keyword id="KW-0488">Methylation</keyword>
<keyword id="KW-0544">Nucleosome core</keyword>
<keyword id="KW-0539">Nucleus</keyword>
<keyword id="KW-0832">Ubl conjugation</keyword>
<accession>P59781</accession>
<accession>B3NLS5</accession>
<comment type="function">
    <text>Core component of nucleosome. Nucleosomes wrap and compact DNA into chromatin, limiting DNA accessibility to the cellular machineries which require DNA as a template. Histones thereby play a central role in transcription regulation, DNA repair, DNA replication and chromosomal stability. DNA accessibility is regulated via a complex set of post-translational modifications of histones, also called histone code, and nucleosome remodeling.</text>
</comment>
<comment type="subunit">
    <text>The nucleosome is a histone octamer containing two molecules each of H2A, H2B, H3 and H4 assembled in one H3-H4 heterotetramer and two H2A-H2B heterodimers. The octamer wraps approximately 147 bp of DNA.</text>
</comment>
<comment type="subcellular location">
    <subcellularLocation>
        <location>Nucleus</location>
    </subcellularLocation>
    <subcellularLocation>
        <location>Chromosome</location>
    </subcellularLocation>
</comment>
<comment type="PTM">
    <text evidence="2">Phosphorylated by the catalytic component of the Dbf4-dependent kinase (DDK) complex Cdc7.</text>
</comment>
<comment type="PTM">
    <text evidence="2">Monoubiquitination of Lys-118 by Bre1 gives a specific tag for epigenetic transcriptional activation and is also prerequisite for histone H3 'Lys-4' and 'Lys-79' methylation (By similarity). Deubiquitination of Lys-118 by the SAGA complex is involved in activating transcription of a large subset of genes (By similarity).</text>
</comment>
<comment type="PTM">
    <text evidence="2">Methylation at Pro-2 increases upon heat shock.</text>
</comment>
<comment type="PTM">
    <text evidence="2">GlcNAcylation at Ser-110 promotes monoubiquitination of Lys-118. It fluctuates in response to extracellular glucose, and associates with transcribed genes.</text>
</comment>
<comment type="similarity">
    <text evidence="4">Belongs to the histone H2B family.</text>
</comment>
<feature type="initiator methionine" description="Removed" evidence="1">
    <location>
        <position position="1"/>
    </location>
</feature>
<feature type="chain" id="PRO_0000071858" description="Histone H2B">
    <location>
        <begin position="2"/>
        <end position="123"/>
    </location>
</feature>
<feature type="region of interest" description="Disordered" evidence="3">
    <location>
        <begin position="1"/>
        <end position="30"/>
    </location>
</feature>
<feature type="modified residue" description="N-methylproline; partial" evidence="2">
    <location>
        <position position="2"/>
    </location>
</feature>
<feature type="modified residue" description="N6-succinyllysine" evidence="2">
    <location>
        <position position="44"/>
    </location>
</feature>
<feature type="modified residue" description="N6-succinyllysine" evidence="2">
    <location>
        <position position="114"/>
    </location>
</feature>
<feature type="modified residue" description="N6-succinyllysine" evidence="2">
    <location>
        <position position="118"/>
    </location>
</feature>
<feature type="glycosylation site" description="O-linked (GlcNAc) serine" evidence="1">
    <location>
        <position position="110"/>
    </location>
</feature>
<feature type="cross-link" description="Glycyl lysine isopeptide (Lys-Gly) (interchain with G-Cter in ubiquitin)" evidence="2">
    <location>
        <position position="118"/>
    </location>
</feature>
<protein>
    <recommendedName>
        <fullName>Histone H2B</fullName>
    </recommendedName>
</protein>
<proteinExistence type="inferred from homology"/>
<dbReference type="EMBL" id="AB073634">
    <property type="protein sequence ID" value="BAC54553.1"/>
    <property type="molecule type" value="Genomic_DNA"/>
</dbReference>
<dbReference type="EMBL" id="CH954179">
    <property type="protein sequence ID" value="EDV54391.1"/>
    <property type="molecule type" value="Genomic_DNA"/>
</dbReference>
<dbReference type="EMBL" id="CH954179">
    <property type="protein sequence ID" value="EDV54396.1"/>
    <property type="molecule type" value="Genomic_DNA"/>
</dbReference>
<dbReference type="EMBL" id="CH954179">
    <property type="protein sequence ID" value="EDV54401.1"/>
    <property type="molecule type" value="Genomic_DNA"/>
</dbReference>
<dbReference type="EMBL" id="CH954354">
    <property type="protein sequence ID" value="EDV45312.1"/>
    <property type="molecule type" value="Genomic_DNA"/>
</dbReference>
<dbReference type="EMBL" id="CH954354">
    <property type="protein sequence ID" value="EDV45317.1"/>
    <property type="molecule type" value="Genomic_DNA"/>
</dbReference>
<dbReference type="EMBL" id="CH954354">
    <property type="protein sequence ID" value="EDV45322.1"/>
    <property type="molecule type" value="Genomic_DNA"/>
</dbReference>
<dbReference type="EMBL" id="CH954354">
    <property type="protein sequence ID" value="EDV45327.1"/>
    <property type="molecule type" value="Genomic_DNA"/>
</dbReference>
<dbReference type="EMBL" id="CH954357">
    <property type="protein sequence ID" value="EDV45119.1"/>
    <property type="molecule type" value="Genomic_DNA"/>
</dbReference>
<dbReference type="EMBL" id="CH954357">
    <property type="protein sequence ID" value="EDV45124.1"/>
    <property type="molecule type" value="Genomic_DNA"/>
</dbReference>
<dbReference type="EMBL" id="CH954357">
    <property type="protein sequence ID" value="EDV45129.1"/>
    <property type="molecule type" value="Genomic_DNA"/>
</dbReference>
<dbReference type="EMBL" id="CH954357">
    <property type="protein sequence ID" value="EDV45134.1"/>
    <property type="molecule type" value="Genomic_DNA"/>
</dbReference>
<dbReference type="EMBL" id="CH954357">
    <property type="protein sequence ID" value="EDV45138.1"/>
    <property type="molecule type" value="Genomic_DNA"/>
</dbReference>
<dbReference type="EMBL" id="CH954440">
    <property type="protein sequence ID" value="EDV45297.1"/>
    <property type="molecule type" value="Genomic_DNA"/>
</dbReference>
<dbReference type="EMBL" id="CH954440">
    <property type="protein sequence ID" value="EDV45302.1"/>
    <property type="molecule type" value="Genomic_DNA"/>
</dbReference>
<dbReference type="EMBL" id="CH954690">
    <property type="protein sequence ID" value="EDV45079.1"/>
    <property type="molecule type" value="Genomic_DNA"/>
</dbReference>
<dbReference type="EMBL" id="CH954690">
    <property type="protein sequence ID" value="EDV45084.1"/>
    <property type="molecule type" value="Genomic_DNA"/>
</dbReference>
<dbReference type="EMBL" id="CH955154">
    <property type="protein sequence ID" value="EDV45332.1"/>
    <property type="molecule type" value="Genomic_DNA"/>
</dbReference>
<dbReference type="EMBL" id="CH955254">
    <property type="protein sequence ID" value="EDV45102.1"/>
    <property type="molecule type" value="Genomic_DNA"/>
</dbReference>
<dbReference type="EMBL" id="CH955409">
    <property type="protein sequence ID" value="EDV45190.1"/>
    <property type="molecule type" value="Genomic_DNA"/>
</dbReference>
<dbReference type="EMBL" id="CH956753">
    <property type="protein sequence ID" value="EDV45076.1"/>
    <property type="molecule type" value="Genomic_DNA"/>
</dbReference>
<dbReference type="EMBL" id="CH957170">
    <property type="protein sequence ID" value="EDV45087.1"/>
    <property type="molecule type" value="Genomic_DNA"/>
</dbReference>
<dbReference type="EMBL" id="CH958399">
    <property type="protein sequence ID" value="EDV45063.1"/>
    <property type="molecule type" value="Genomic_DNA"/>
</dbReference>
<dbReference type="RefSeq" id="XP_001973991.1">
    <property type="nucleotide sequence ID" value="XM_001973955.2"/>
</dbReference>
<dbReference type="RefSeq" id="XP_001974001.1">
    <property type="nucleotide sequence ID" value="XM_001973965.1"/>
</dbReference>
<dbReference type="RefSeq" id="XP_001982891.1">
    <property type="nucleotide sequence ID" value="XM_001982855.1"/>
</dbReference>
<dbReference type="RefSeq" id="XP_001982901.1">
    <property type="nucleotide sequence ID" value="XM_001982865.1"/>
</dbReference>
<dbReference type="RefSeq" id="XP_001982920.1">
    <property type="nucleotide sequence ID" value="XM_001982884.1"/>
</dbReference>
<dbReference type="RefSeq" id="XP_001982925.1">
    <property type="nucleotide sequence ID" value="XM_001982889.1"/>
</dbReference>
<dbReference type="RefSeq" id="XP_001982930.1">
    <property type="nucleotide sequence ID" value="XM_001982894.1"/>
</dbReference>
<dbReference type="RefSeq" id="XP_001982934.1">
    <property type="nucleotide sequence ID" value="XM_001982898.1"/>
</dbReference>
<dbReference type="RefSeq" id="XP_001982951.1">
    <property type="nucleotide sequence ID" value="XM_001982915.1"/>
</dbReference>
<dbReference type="RefSeq" id="XP_001982956.1">
    <property type="nucleotide sequence ID" value="XM_001982920.1"/>
</dbReference>
<dbReference type="RefSeq" id="XP_001983002.1">
    <property type="nucleotide sequence ID" value="XM_001982966.1"/>
</dbReference>
<dbReference type="RefSeq" id="XP_001983007.1">
    <property type="nucleotide sequence ID" value="XM_001982971.1"/>
</dbReference>
<dbReference type="RefSeq" id="XP_001983020.1">
    <property type="nucleotide sequence ID" value="XM_001982984.1"/>
</dbReference>
<dbReference type="RefSeq" id="XP_001983046.1">
    <property type="nucleotide sequence ID" value="XM_001983010.1"/>
</dbReference>
<dbReference type="RefSeq" id="XP_001983055.1">
    <property type="nucleotide sequence ID" value="XM_001983019.2"/>
</dbReference>
<dbReference type="RefSeq" id="XP_001983069.1">
    <property type="nucleotide sequence ID" value="XM_001983033.1"/>
</dbReference>
<dbReference type="RefSeq" id="XP_001983104.1">
    <property type="nucleotide sequence ID" value="XM_001983068.1"/>
</dbReference>
<dbReference type="RefSeq" id="XP_001983142.1">
    <property type="nucleotide sequence ID" value="XM_001983106.1"/>
</dbReference>
<dbReference type="SMR" id="P59781"/>
<dbReference type="GlyCosmos" id="P59781">
    <property type="glycosylation" value="1 site, No reported glycans"/>
</dbReference>
<dbReference type="EnsemblMetazoa" id="FBtr0131007">
    <property type="protein sequence ID" value="FBpp0129499"/>
    <property type="gene ID" value="FBgn0103256"/>
</dbReference>
<dbReference type="EnsemblMetazoa" id="FBtr0131068">
    <property type="protein sequence ID" value="FBpp0129560"/>
    <property type="gene ID" value="FBgn0103316"/>
</dbReference>
<dbReference type="EnsemblMetazoa" id="FBtr0131070">
    <property type="protein sequence ID" value="FBpp0129562"/>
    <property type="gene ID" value="FBgn0103318"/>
</dbReference>
<dbReference type="EnsemblMetazoa" id="FBtr0131072">
    <property type="protein sequence ID" value="FBpp0129564"/>
    <property type="gene ID" value="FBgn0103320"/>
</dbReference>
<dbReference type="EnsemblMetazoa" id="FBtr0131074">
    <property type="protein sequence ID" value="FBpp0129566"/>
    <property type="gene ID" value="FBgn0103322"/>
</dbReference>
<dbReference type="EnsemblMetazoa" id="FBtr0131076">
    <property type="protein sequence ID" value="FBpp0129568"/>
    <property type="gene ID" value="FBgn0103324"/>
</dbReference>
<dbReference type="EnsemblMetazoa" id="FBtr0132635">
    <property type="protein sequence ID" value="FBpp0131127"/>
    <property type="gene ID" value="FBgn0104869"/>
</dbReference>
<dbReference type="EnsemblMetazoa" id="FBtr0132637">
    <property type="protein sequence ID" value="FBpp0131129"/>
    <property type="gene ID" value="FBgn0104871"/>
</dbReference>
<dbReference type="EnsemblMetazoa" id="FBtr0132639">
    <property type="protein sequence ID" value="FBpp0131131"/>
    <property type="gene ID" value="FBgn0104873"/>
</dbReference>
<dbReference type="EnsemblMetazoa" id="FBtr0133011">
    <property type="protein sequence ID" value="FBpp0131503"/>
    <property type="gene ID" value="FBgn0105230"/>
</dbReference>
<dbReference type="EnsemblMetazoa" id="FBtr0133082">
    <property type="protein sequence ID" value="FBpp0131574"/>
    <property type="gene ID" value="FBgn0105301"/>
</dbReference>
<dbReference type="EnsemblMetazoa" id="FBtr0133084">
    <property type="protein sequence ID" value="FBpp0131576"/>
    <property type="gene ID" value="FBgn0105303"/>
</dbReference>
<dbReference type="EnsemblMetazoa" id="FBtr0133086">
    <property type="protein sequence ID" value="FBpp0131578"/>
    <property type="gene ID" value="FBgn0105305"/>
</dbReference>
<dbReference type="EnsemblMetazoa" id="FBtr0133089">
    <property type="protein sequence ID" value="FBpp0131581"/>
    <property type="gene ID" value="FBgn0105308"/>
</dbReference>
<dbReference type="EnsemblMetazoa" id="FBtr0133090">
    <property type="protein sequence ID" value="FBpp0131582"/>
    <property type="gene ID" value="FBgn0105309"/>
</dbReference>
<dbReference type="EnsemblMetazoa" id="FBtr0133111">
    <property type="protein sequence ID" value="FBpp0131603"/>
    <property type="gene ID" value="FBgn0105330"/>
</dbReference>
<dbReference type="EnsemblMetazoa" id="FBtr0133115">
    <property type="protein sequence ID" value="FBpp0131607"/>
    <property type="gene ID" value="FBgn0105334"/>
</dbReference>
<dbReference type="EnsemblMetazoa" id="FBtr0136427">
    <property type="protein sequence ID" value="FBpp0134919"/>
    <property type="gene ID" value="FBgn0108605"/>
</dbReference>
<dbReference type="EnsemblMetazoa" id="FBtr0138738">
    <property type="protein sequence ID" value="FBpp0137230"/>
    <property type="gene ID" value="FBgn0110894"/>
</dbReference>
<dbReference type="EnsemblMetazoa" id="FBtr0139885">
    <property type="protein sequence ID" value="FBpp0138377"/>
    <property type="gene ID" value="FBgn0112032"/>
</dbReference>
<dbReference type="EnsemblMetazoa" id="FBtr0139899">
    <property type="protein sequence ID" value="FBpp0138391"/>
    <property type="gene ID" value="FBgn0112046"/>
</dbReference>
<dbReference type="EnsemblMetazoa" id="FBtr0139902">
    <property type="protein sequence ID" value="FBpp0138394"/>
    <property type="gene ID" value="FBgn0112049"/>
</dbReference>
<dbReference type="EnsemblMetazoa" id="FBtr0141542">
    <property type="protein sequence ID" value="FBpp0140034"/>
    <property type="gene ID" value="FBgn0113667"/>
</dbReference>
<dbReference type="EnsemblMetazoa" id="FBtr0141546">
    <property type="protein sequence ID" value="FBpp0140038"/>
    <property type="gene ID" value="FBgn0113671"/>
</dbReference>
<dbReference type="EnsemblMetazoa" id="FBtr0141548">
    <property type="protein sequence ID" value="FBpp0140040"/>
    <property type="gene ID" value="FBgn0113673"/>
</dbReference>
<dbReference type="EnsemblMetazoa" id="XM_001973960.2">
    <property type="protein sequence ID" value="XP_001973996.1"/>
    <property type="gene ID" value="LOC6548707"/>
</dbReference>
<dbReference type="EnsemblMetazoa" id="XM_001982860.2">
    <property type="protein sequence ID" value="XP_001982896.1"/>
    <property type="gene ID" value="LOC6556031"/>
</dbReference>
<dbReference type="EnsemblMetazoa" id="XM_001982870.2">
    <property type="protein sequence ID" value="XP_001982906.1"/>
    <property type="gene ID" value="LOC6556046"/>
</dbReference>
<dbReference type="EnsemblMetazoa" id="XM_001982875.2">
    <property type="protein sequence ID" value="XP_001982911.1"/>
    <property type="gene ID" value="LOC6556051"/>
</dbReference>
<dbReference type="EnsemblMetazoa" id="XM_001982879.2">
    <property type="protein sequence ID" value="XP_001982915.1"/>
    <property type="gene ID" value="LOC6556058"/>
</dbReference>
<dbReference type="EnsemblMetazoa" id="XM_001983023.2">
    <property type="protein sequence ID" value="XP_001983059.1"/>
    <property type="gene ID" value="LOC6556228"/>
</dbReference>
<dbReference type="EnsemblMetazoa" id="XM_001983077.3">
    <property type="protein sequence ID" value="XP_001983113.1"/>
    <property type="gene ID" value="LOC6556303"/>
</dbReference>
<dbReference type="EnsemblMetazoa" id="XM_026983647.1">
    <property type="protein sequence ID" value="XP_026839448.1"/>
    <property type="gene ID" value="LOC113564800"/>
</dbReference>
<dbReference type="EnsemblMetazoa" id="XM_026983648.1">
    <property type="protein sequence ID" value="XP_026839449.1"/>
    <property type="gene ID" value="LOC113564801"/>
</dbReference>
<dbReference type="GeneID" id="6548707"/>
<dbReference type="GeneID" id="6556031"/>
<dbReference type="GeneID" id="6556046"/>
<dbReference type="GeneID" id="6556228"/>
<dbReference type="GeneID" id="6556303"/>
<dbReference type="GeneID" id="6556359"/>
<dbReference type="KEGG" id="der:6548707"/>
<dbReference type="KEGG" id="der:6548712"/>
<dbReference type="KEGG" id="der:6556031"/>
<dbReference type="KEGG" id="der:6556046"/>
<dbReference type="KEGG" id="der:6556051"/>
<dbReference type="KEGG" id="der:6556058"/>
<dbReference type="KEGG" id="der:6556228"/>
<dbReference type="KEGG" id="der:6556303"/>
<dbReference type="KEGG" id="der:6556359"/>
<dbReference type="eggNOG" id="KOG1744">
    <property type="taxonomic scope" value="Eukaryota"/>
</dbReference>
<dbReference type="HOGENOM" id="CLU_075666_2_0_1"/>
<dbReference type="OMA" id="LLXGELA"/>
<dbReference type="OrthoDB" id="7633403at2759"/>
<dbReference type="PhylomeDB" id="P59781"/>
<dbReference type="Proteomes" id="UP000008711">
    <property type="component" value="Unassembled WGS sequence"/>
</dbReference>
<dbReference type="GO" id="GO:0000786">
    <property type="term" value="C:nucleosome"/>
    <property type="evidence" value="ECO:0007669"/>
    <property type="project" value="UniProtKB-KW"/>
</dbReference>
<dbReference type="GO" id="GO:0005634">
    <property type="term" value="C:nucleus"/>
    <property type="evidence" value="ECO:0007669"/>
    <property type="project" value="UniProtKB-SubCell"/>
</dbReference>
<dbReference type="GO" id="GO:0003677">
    <property type="term" value="F:DNA binding"/>
    <property type="evidence" value="ECO:0007669"/>
    <property type="project" value="UniProtKB-KW"/>
</dbReference>
<dbReference type="GO" id="GO:0046982">
    <property type="term" value="F:protein heterodimerization activity"/>
    <property type="evidence" value="ECO:0007669"/>
    <property type="project" value="InterPro"/>
</dbReference>
<dbReference type="GO" id="GO:0044877">
    <property type="term" value="F:protein-containing complex binding"/>
    <property type="evidence" value="ECO:0000250"/>
    <property type="project" value="UniProtKB"/>
</dbReference>
<dbReference type="GO" id="GO:0030527">
    <property type="term" value="F:structural constituent of chromatin"/>
    <property type="evidence" value="ECO:0007669"/>
    <property type="project" value="InterPro"/>
</dbReference>
<dbReference type="CDD" id="cd22910">
    <property type="entry name" value="HFD_H2B"/>
    <property type="match status" value="1"/>
</dbReference>
<dbReference type="FunFam" id="1.10.20.10:FF:000016">
    <property type="entry name" value="Histone H2B"/>
    <property type="match status" value="1"/>
</dbReference>
<dbReference type="Gene3D" id="1.10.20.10">
    <property type="entry name" value="Histone, subunit A"/>
    <property type="match status" value="1"/>
</dbReference>
<dbReference type="InterPro" id="IPR009072">
    <property type="entry name" value="Histone-fold"/>
</dbReference>
<dbReference type="InterPro" id="IPR007125">
    <property type="entry name" value="Histone_H2A/H2B/H3"/>
</dbReference>
<dbReference type="InterPro" id="IPR000558">
    <property type="entry name" value="Histone_H2B"/>
</dbReference>
<dbReference type="InterPro" id="IPR055333">
    <property type="entry name" value="HISTONE_H2B_site"/>
</dbReference>
<dbReference type="PANTHER" id="PTHR23428">
    <property type="entry name" value="HISTONE H2B"/>
    <property type="match status" value="1"/>
</dbReference>
<dbReference type="Pfam" id="PF00125">
    <property type="entry name" value="Histone"/>
    <property type="match status" value="1"/>
</dbReference>
<dbReference type="PRINTS" id="PR00621">
    <property type="entry name" value="HISTONEH2B"/>
</dbReference>
<dbReference type="SMART" id="SM00427">
    <property type="entry name" value="H2B"/>
    <property type="match status" value="1"/>
</dbReference>
<dbReference type="SUPFAM" id="SSF47113">
    <property type="entry name" value="Histone-fold"/>
    <property type="match status" value="1"/>
</dbReference>
<dbReference type="PROSITE" id="PS00357">
    <property type="entry name" value="HISTONE_H2B"/>
    <property type="match status" value="1"/>
</dbReference>
<sequence>MPPKTSGKAAKKAGKAQKNITKTDKKKKRKRKESYAIYIYKVLKQVHPDTGISSKAMSIMNSFVNDIFERIAAEASRLAHYNKRSTITSREIQTAVRLLLPGELAKHAVSEGTKAVTKYTSSK</sequence>
<gene>
    <name type="primary">His2B</name>
</gene>
<gene>
    <name type="ORF">GG10953</name>
</gene>
<gene>
    <name type="ORF">GG11014</name>
</gene>
<gene>
    <name type="ORF">GG11016</name>
</gene>
<gene>
    <name type="ORF">GG11018</name>
</gene>
<gene>
    <name type="ORF">GG11020</name>
</gene>
<gene>
    <name type="ORF">GG11022</name>
</gene>
<gene>
    <name type="ORF">GG12581</name>
</gene>
<gene>
    <name type="ORF">GG12583</name>
</gene>
<gene>
    <name type="ORF">GG12585</name>
</gene>
<gene>
    <name type="ORF">GG12957</name>
</gene>
<gene>
    <name type="ORF">GG13028</name>
</gene>
<gene>
    <name type="ORF">GG13030</name>
</gene>
<gene>
    <name type="ORF">GG13032</name>
</gene>
<gene>
    <name type="ORF">GG13035</name>
</gene>
<gene>
    <name type="ORF">GG13036</name>
</gene>
<gene>
    <name type="ORF">GG13057</name>
</gene>
<gene>
    <name type="ORF">GG13061</name>
</gene>
<gene>
    <name type="ORF">GG16373</name>
</gene>
<gene>
    <name type="ORF">GG18684</name>
</gene>
<gene>
    <name type="ORF">GG19831</name>
</gene>
<gene>
    <name type="ORF">GG19845</name>
</gene>
<gene>
    <name type="ORF">GG19848</name>
</gene>
<gene>
    <name type="ORF">GG21488</name>
</gene>
<gene>
    <name type="ORF">GG21492</name>
</gene>
<gene>
    <name type="ORF">GG21494</name>
</gene>